<comment type="function">
    <text evidence="1">Located on the platform of the 30S subunit, it bridges several disparate RNA helices of the 16S rRNA. Forms part of the Shine-Dalgarno cleft in the 70S ribosome.</text>
</comment>
<comment type="subunit">
    <text evidence="1">Part of the 30S ribosomal subunit. Interacts with proteins S7 and S18. Binds to IF-3.</text>
</comment>
<comment type="similarity">
    <text evidence="1">Belongs to the universal ribosomal protein uS11 family.</text>
</comment>
<evidence type="ECO:0000255" key="1">
    <source>
        <dbReference type="HAMAP-Rule" id="MF_01310"/>
    </source>
</evidence>
<evidence type="ECO:0000305" key="2"/>
<feature type="chain" id="PRO_0000123238" description="Small ribosomal subunit protein uS11">
    <location>
        <begin position="1"/>
        <end position="127"/>
    </location>
</feature>
<proteinExistence type="inferred from homology"/>
<sequence length="127" mass="13369">MAKPTRKRRVKKNIESGVAHIHATFNNTIVMITDVHGNALAWSSAGALGFKGSRKSTPFAAQMAAEAAAKSAQEHGLKTVEVTVKGPGSGRESAIRALAAAGLEVTAIRDVTPVPHNGARPPKRRRV</sequence>
<name>RS11_STRP8</name>
<accession>P66362</accession>
<accession>Q8K8X0</accession>
<accession>Q8P2Z3</accession>
<gene>
    <name evidence="1" type="primary">rpsK</name>
    <name type="ordered locus">spyM18_0078</name>
</gene>
<keyword id="KW-0687">Ribonucleoprotein</keyword>
<keyword id="KW-0689">Ribosomal protein</keyword>
<keyword id="KW-0694">RNA-binding</keyword>
<keyword id="KW-0699">rRNA-binding</keyword>
<protein>
    <recommendedName>
        <fullName evidence="1">Small ribosomal subunit protein uS11</fullName>
    </recommendedName>
    <alternativeName>
        <fullName evidence="2">30S ribosomal protein S11</fullName>
    </alternativeName>
</protein>
<dbReference type="EMBL" id="AE009949">
    <property type="protein sequence ID" value="AAL96901.1"/>
    <property type="molecule type" value="Genomic_DNA"/>
</dbReference>
<dbReference type="RefSeq" id="WP_001118387.1">
    <property type="nucleotide sequence ID" value="NC_003485.1"/>
</dbReference>
<dbReference type="SMR" id="P66362"/>
<dbReference type="GeneID" id="93825319"/>
<dbReference type="KEGG" id="spm:spyM18_0078"/>
<dbReference type="HOGENOM" id="CLU_072439_5_0_9"/>
<dbReference type="GO" id="GO:1990904">
    <property type="term" value="C:ribonucleoprotein complex"/>
    <property type="evidence" value="ECO:0007669"/>
    <property type="project" value="UniProtKB-KW"/>
</dbReference>
<dbReference type="GO" id="GO:0005840">
    <property type="term" value="C:ribosome"/>
    <property type="evidence" value="ECO:0007669"/>
    <property type="project" value="UniProtKB-KW"/>
</dbReference>
<dbReference type="GO" id="GO:0019843">
    <property type="term" value="F:rRNA binding"/>
    <property type="evidence" value="ECO:0007669"/>
    <property type="project" value="UniProtKB-UniRule"/>
</dbReference>
<dbReference type="GO" id="GO:0003735">
    <property type="term" value="F:structural constituent of ribosome"/>
    <property type="evidence" value="ECO:0007669"/>
    <property type="project" value="InterPro"/>
</dbReference>
<dbReference type="GO" id="GO:0006412">
    <property type="term" value="P:translation"/>
    <property type="evidence" value="ECO:0007669"/>
    <property type="project" value="UniProtKB-UniRule"/>
</dbReference>
<dbReference type="FunFam" id="3.30.420.80:FF:000001">
    <property type="entry name" value="30S ribosomal protein S11"/>
    <property type="match status" value="1"/>
</dbReference>
<dbReference type="Gene3D" id="3.30.420.80">
    <property type="entry name" value="Ribosomal protein S11"/>
    <property type="match status" value="1"/>
</dbReference>
<dbReference type="HAMAP" id="MF_01310">
    <property type="entry name" value="Ribosomal_uS11"/>
    <property type="match status" value="1"/>
</dbReference>
<dbReference type="InterPro" id="IPR001971">
    <property type="entry name" value="Ribosomal_uS11"/>
</dbReference>
<dbReference type="InterPro" id="IPR019981">
    <property type="entry name" value="Ribosomal_uS11_bac-type"/>
</dbReference>
<dbReference type="InterPro" id="IPR018102">
    <property type="entry name" value="Ribosomal_uS11_CS"/>
</dbReference>
<dbReference type="InterPro" id="IPR036967">
    <property type="entry name" value="Ribosomal_uS11_sf"/>
</dbReference>
<dbReference type="NCBIfam" id="NF003698">
    <property type="entry name" value="PRK05309.1"/>
    <property type="match status" value="1"/>
</dbReference>
<dbReference type="NCBIfam" id="TIGR03632">
    <property type="entry name" value="uS11_bact"/>
    <property type="match status" value="1"/>
</dbReference>
<dbReference type="PANTHER" id="PTHR11759">
    <property type="entry name" value="40S RIBOSOMAL PROTEIN S14/30S RIBOSOMAL PROTEIN S11"/>
    <property type="match status" value="1"/>
</dbReference>
<dbReference type="Pfam" id="PF00411">
    <property type="entry name" value="Ribosomal_S11"/>
    <property type="match status" value="1"/>
</dbReference>
<dbReference type="PIRSF" id="PIRSF002131">
    <property type="entry name" value="Ribosomal_S11"/>
    <property type="match status" value="1"/>
</dbReference>
<dbReference type="SUPFAM" id="SSF53137">
    <property type="entry name" value="Translational machinery components"/>
    <property type="match status" value="1"/>
</dbReference>
<dbReference type="PROSITE" id="PS00054">
    <property type="entry name" value="RIBOSOMAL_S11"/>
    <property type="match status" value="1"/>
</dbReference>
<organism>
    <name type="scientific">Streptococcus pyogenes serotype M18 (strain MGAS8232)</name>
    <dbReference type="NCBI Taxonomy" id="186103"/>
    <lineage>
        <taxon>Bacteria</taxon>
        <taxon>Bacillati</taxon>
        <taxon>Bacillota</taxon>
        <taxon>Bacilli</taxon>
        <taxon>Lactobacillales</taxon>
        <taxon>Streptococcaceae</taxon>
        <taxon>Streptococcus</taxon>
    </lineage>
</organism>
<reference key="1">
    <citation type="journal article" date="2002" name="Proc. Natl. Acad. Sci. U.S.A.">
        <title>Genome sequence and comparative microarray analysis of serotype M18 group A Streptococcus strains associated with acute rheumatic fever outbreaks.</title>
        <authorList>
            <person name="Smoot J.C."/>
            <person name="Barbian K.D."/>
            <person name="Van Gompel J.J."/>
            <person name="Smoot L.M."/>
            <person name="Chaussee M.S."/>
            <person name="Sylva G.L."/>
            <person name="Sturdevant D.E."/>
            <person name="Ricklefs S.M."/>
            <person name="Porcella S.F."/>
            <person name="Parkins L.D."/>
            <person name="Beres S.B."/>
            <person name="Campbell D.S."/>
            <person name="Smith T.M."/>
            <person name="Zhang Q."/>
            <person name="Kapur V."/>
            <person name="Daly J.A."/>
            <person name="Veasy L.G."/>
            <person name="Musser J.M."/>
        </authorList>
    </citation>
    <scope>NUCLEOTIDE SEQUENCE [LARGE SCALE GENOMIC DNA]</scope>
    <source>
        <strain>MGAS8232</strain>
    </source>
</reference>